<name>TBC3B_HUMAN</name>
<organism>
    <name type="scientific">Homo sapiens</name>
    <name type="common">Human</name>
    <dbReference type="NCBI Taxonomy" id="9606"/>
    <lineage>
        <taxon>Eukaryota</taxon>
        <taxon>Metazoa</taxon>
        <taxon>Chordata</taxon>
        <taxon>Craniata</taxon>
        <taxon>Vertebrata</taxon>
        <taxon>Euteleostomi</taxon>
        <taxon>Mammalia</taxon>
        <taxon>Eutheria</taxon>
        <taxon>Euarchontoglires</taxon>
        <taxon>Primates</taxon>
        <taxon>Haplorrhini</taxon>
        <taxon>Catarrhini</taxon>
        <taxon>Hominidae</taxon>
        <taxon>Homo</taxon>
    </lineage>
</organism>
<comment type="function">
    <text evidence="1">Acts as a GTPase activating protein for RAB5. Does not act on RAB4 or RAB11 (By similarity).</text>
</comment>
<comment type="subcellular location">
    <subcellularLocation>
        <location evidence="1">Cell membrane</location>
        <topology evidence="1">Lipid-anchor</topology>
    </subcellularLocation>
    <text evidence="1">Associated with lipid rafts.</text>
</comment>
<comment type="PTM">
    <text evidence="1">Ubiquitinated by a CUL7-based E3 ligase, which leads to proteasomal degradation.</text>
</comment>
<comment type="PTM">
    <text evidence="1">Palmitoylation is required for membrane localization and protects TBC1D3 from ubiquitination.</text>
</comment>
<comment type="miscellaneous">
    <text>TBC1D3 is encoded by a collection of very similar paralogs with multiple copies of each paralog, some human genomes encoding well over 50 copies depending on ethnic origin of the donor.</text>
</comment>
<keyword id="KW-1003">Cell membrane</keyword>
<keyword id="KW-0343">GTPase activation</keyword>
<keyword id="KW-0449">Lipoprotein</keyword>
<keyword id="KW-0472">Membrane</keyword>
<keyword id="KW-0564">Palmitate</keyword>
<keyword id="KW-1185">Reference proteome</keyword>
<keyword id="KW-0832">Ubl conjugation</keyword>
<gene>
    <name type="primary">TBC1D3B</name>
    <name type="synonym">TBC1D3I</name>
</gene>
<proteinExistence type="evidence at transcript level"/>
<dbReference type="EMBL" id="AK292257">
    <property type="protein sequence ID" value="BAF84946.1"/>
    <property type="molecule type" value="mRNA"/>
</dbReference>
<dbReference type="EMBL" id="AC243829">
    <property type="status" value="NOT_ANNOTATED_CDS"/>
    <property type="molecule type" value="Genomic_DNA"/>
</dbReference>
<dbReference type="CCDS" id="CCDS42300.1"/>
<dbReference type="RefSeq" id="NP_001001417.6">
    <property type="nucleotide sequence ID" value="NM_001001417.6"/>
</dbReference>
<dbReference type="SMR" id="A6NDS4"/>
<dbReference type="FunCoup" id="A6NDS4">
    <property type="interactions" value="53"/>
</dbReference>
<dbReference type="IntAct" id="A6NDS4">
    <property type="interactions" value="2"/>
</dbReference>
<dbReference type="STRING" id="9606.ENSP00000478473"/>
<dbReference type="iPTMnet" id="A6NDS4"/>
<dbReference type="PhosphoSitePlus" id="A6NDS4"/>
<dbReference type="BioMuta" id="TBC1D3B"/>
<dbReference type="jPOST" id="A6NDS4"/>
<dbReference type="MassIVE" id="A6NDS4"/>
<dbReference type="PaxDb" id="9606-ENSP00000484556"/>
<dbReference type="PeptideAtlas" id="A6NDS4"/>
<dbReference type="Antibodypedia" id="75832">
    <property type="antibodies" value="8 antibodies from 4 providers"/>
</dbReference>
<dbReference type="DNASU" id="414059"/>
<dbReference type="Ensembl" id="ENST00000611257.5">
    <property type="protein sequence ID" value="ENSP00000478473.1"/>
    <property type="gene ID" value="ENSG00000274808.6"/>
</dbReference>
<dbReference type="GeneID" id="414059"/>
<dbReference type="KEGG" id="hsa:414059"/>
<dbReference type="MANE-Select" id="ENST00000611257.5">
    <property type="protein sequence ID" value="ENSP00000478473.1"/>
    <property type="RefSeq nucleotide sequence ID" value="NM_001001417.7"/>
    <property type="RefSeq protein sequence ID" value="NP_001001417.6"/>
</dbReference>
<dbReference type="UCSC" id="uc032fbj.2">
    <property type="organism name" value="human"/>
</dbReference>
<dbReference type="AGR" id="HGNC:27011"/>
<dbReference type="CTD" id="414059"/>
<dbReference type="GeneCards" id="TBC1D3B"/>
<dbReference type="HGNC" id="HGNC:27011">
    <property type="gene designation" value="TBC1D3B"/>
</dbReference>
<dbReference type="HPA" id="ENSG00000274808">
    <property type="expression patterns" value="Low tissue specificity"/>
</dbReference>
<dbReference type="MIM" id="610144">
    <property type="type" value="gene"/>
</dbReference>
<dbReference type="neXtProt" id="NX_A6NDS4"/>
<dbReference type="OpenTargets" id="ENSG00000274808"/>
<dbReference type="PharmGKB" id="PA142670833"/>
<dbReference type="VEuPathDB" id="HostDB:ENSG00000274808"/>
<dbReference type="eggNOG" id="KOG1102">
    <property type="taxonomic scope" value="Eukaryota"/>
</dbReference>
<dbReference type="GeneTree" id="ENSGT00940000163624"/>
<dbReference type="HOGENOM" id="CLU_005350_10_5_1"/>
<dbReference type="InParanoid" id="A6NDS4"/>
<dbReference type="OrthoDB" id="9535050at2759"/>
<dbReference type="PAN-GO" id="A6NDS4">
    <property type="GO annotations" value="2 GO annotations based on evolutionary models"/>
</dbReference>
<dbReference type="TreeFam" id="TF318099"/>
<dbReference type="PathwayCommons" id="A6NDS4"/>
<dbReference type="SignaLink" id="A6NDS4"/>
<dbReference type="BioGRID-ORCS" id="414059">
    <property type="hits" value="279 hits in 568 CRISPR screens"/>
</dbReference>
<dbReference type="GenomeRNAi" id="414059"/>
<dbReference type="Pharos" id="A6NDS4">
    <property type="development level" value="Tdark"/>
</dbReference>
<dbReference type="PRO" id="PR:A6NDS4"/>
<dbReference type="Proteomes" id="UP000005640">
    <property type="component" value="Chromosome 17"/>
</dbReference>
<dbReference type="RNAct" id="A6NDS4">
    <property type="molecule type" value="protein"/>
</dbReference>
<dbReference type="Bgee" id="ENSG00000274808">
    <property type="expression patterns" value="Expressed in right hemisphere of cerebellum and 94 other cell types or tissues"/>
</dbReference>
<dbReference type="ExpressionAtlas" id="A6NDS4">
    <property type="expression patterns" value="baseline and differential"/>
</dbReference>
<dbReference type="GO" id="GO:0005886">
    <property type="term" value="C:plasma membrane"/>
    <property type="evidence" value="ECO:0007669"/>
    <property type="project" value="UniProtKB-SubCell"/>
</dbReference>
<dbReference type="GO" id="GO:0005096">
    <property type="term" value="F:GTPase activator activity"/>
    <property type="evidence" value="ECO:0000318"/>
    <property type="project" value="GO_Central"/>
</dbReference>
<dbReference type="FunFam" id="1.10.10.750:FF:000001">
    <property type="entry name" value="TBC1 domain family member 10A"/>
    <property type="match status" value="1"/>
</dbReference>
<dbReference type="FunFam" id="1.10.8.270:FF:000016">
    <property type="entry name" value="TBC1 domain family member 2A"/>
    <property type="match status" value="1"/>
</dbReference>
<dbReference type="FunFam" id="1.10.472.80:FF:000058">
    <property type="entry name" value="Ubiquitin specific peptidase 6"/>
    <property type="match status" value="1"/>
</dbReference>
<dbReference type="Gene3D" id="1.10.8.270">
    <property type="entry name" value="putative rabgap domain of human tbc1 domain family member 14 like domains"/>
    <property type="match status" value="1"/>
</dbReference>
<dbReference type="Gene3D" id="1.10.10.750">
    <property type="entry name" value="Ypt/Rab-GAP domain of gyp1p, domain 1"/>
    <property type="match status" value="1"/>
</dbReference>
<dbReference type="InterPro" id="IPR000195">
    <property type="entry name" value="Rab-GAP-TBC_dom"/>
</dbReference>
<dbReference type="InterPro" id="IPR035969">
    <property type="entry name" value="Rab-GAP_TBC_sf"/>
</dbReference>
<dbReference type="InterPro" id="IPR050302">
    <property type="entry name" value="Rab_GAP_TBC_domain"/>
</dbReference>
<dbReference type="PANTHER" id="PTHR47219">
    <property type="entry name" value="RAB GTPASE-ACTIVATING PROTEIN 1-LIKE"/>
    <property type="match status" value="1"/>
</dbReference>
<dbReference type="PANTHER" id="PTHR47219:SF25">
    <property type="entry name" value="RAB-GAP TBC DOMAIN-CONTAINING PROTEIN"/>
    <property type="match status" value="1"/>
</dbReference>
<dbReference type="Pfam" id="PF00566">
    <property type="entry name" value="RabGAP-TBC"/>
    <property type="match status" value="1"/>
</dbReference>
<dbReference type="SMART" id="SM00164">
    <property type="entry name" value="TBC"/>
    <property type="match status" value="1"/>
</dbReference>
<dbReference type="SUPFAM" id="SSF47923">
    <property type="entry name" value="Ypt/Rab-GAP domain of gyp1p"/>
    <property type="match status" value="1"/>
</dbReference>
<dbReference type="PROSITE" id="PS50086">
    <property type="entry name" value="TBC_RABGAP"/>
    <property type="match status" value="1"/>
</dbReference>
<reference key="1">
    <citation type="journal article" date="2004" name="Nat. Genet.">
        <title>Complete sequencing and characterization of 21,243 full-length human cDNAs.</title>
        <authorList>
            <person name="Ota T."/>
            <person name="Suzuki Y."/>
            <person name="Nishikawa T."/>
            <person name="Otsuki T."/>
            <person name="Sugiyama T."/>
            <person name="Irie R."/>
            <person name="Wakamatsu A."/>
            <person name="Hayashi K."/>
            <person name="Sato H."/>
            <person name="Nagai K."/>
            <person name="Kimura K."/>
            <person name="Makita H."/>
            <person name="Sekine M."/>
            <person name="Obayashi M."/>
            <person name="Nishi T."/>
            <person name="Shibahara T."/>
            <person name="Tanaka T."/>
            <person name="Ishii S."/>
            <person name="Yamamoto J."/>
            <person name="Saito K."/>
            <person name="Kawai Y."/>
            <person name="Isono Y."/>
            <person name="Nakamura Y."/>
            <person name="Nagahari K."/>
            <person name="Murakami K."/>
            <person name="Yasuda T."/>
            <person name="Iwayanagi T."/>
            <person name="Wagatsuma M."/>
            <person name="Shiratori A."/>
            <person name="Sudo H."/>
            <person name="Hosoiri T."/>
            <person name="Kaku Y."/>
            <person name="Kodaira H."/>
            <person name="Kondo H."/>
            <person name="Sugawara M."/>
            <person name="Takahashi M."/>
            <person name="Kanda K."/>
            <person name="Yokoi T."/>
            <person name="Furuya T."/>
            <person name="Kikkawa E."/>
            <person name="Omura Y."/>
            <person name="Abe K."/>
            <person name="Kamihara K."/>
            <person name="Katsuta N."/>
            <person name="Sato K."/>
            <person name="Tanikawa M."/>
            <person name="Yamazaki M."/>
            <person name="Ninomiya K."/>
            <person name="Ishibashi T."/>
            <person name="Yamashita H."/>
            <person name="Murakawa K."/>
            <person name="Fujimori K."/>
            <person name="Tanai H."/>
            <person name="Kimata M."/>
            <person name="Watanabe M."/>
            <person name="Hiraoka S."/>
            <person name="Chiba Y."/>
            <person name="Ishida S."/>
            <person name="Ono Y."/>
            <person name="Takiguchi S."/>
            <person name="Watanabe S."/>
            <person name="Yosida M."/>
            <person name="Hotuta T."/>
            <person name="Kusano J."/>
            <person name="Kanehori K."/>
            <person name="Takahashi-Fujii A."/>
            <person name="Hara H."/>
            <person name="Tanase T.-O."/>
            <person name="Nomura Y."/>
            <person name="Togiya S."/>
            <person name="Komai F."/>
            <person name="Hara R."/>
            <person name="Takeuchi K."/>
            <person name="Arita M."/>
            <person name="Imose N."/>
            <person name="Musashino K."/>
            <person name="Yuuki H."/>
            <person name="Oshima A."/>
            <person name="Sasaki N."/>
            <person name="Aotsuka S."/>
            <person name="Yoshikawa Y."/>
            <person name="Matsunawa H."/>
            <person name="Ichihara T."/>
            <person name="Shiohata N."/>
            <person name="Sano S."/>
            <person name="Moriya S."/>
            <person name="Momiyama H."/>
            <person name="Satoh N."/>
            <person name="Takami S."/>
            <person name="Terashima Y."/>
            <person name="Suzuki O."/>
            <person name="Nakagawa S."/>
            <person name="Senoh A."/>
            <person name="Mizoguchi H."/>
            <person name="Goto Y."/>
            <person name="Shimizu F."/>
            <person name="Wakebe H."/>
            <person name="Hishigaki H."/>
            <person name="Watanabe T."/>
            <person name="Sugiyama A."/>
            <person name="Takemoto M."/>
            <person name="Kawakami B."/>
            <person name="Yamazaki M."/>
            <person name="Watanabe K."/>
            <person name="Kumagai A."/>
            <person name="Itakura S."/>
            <person name="Fukuzumi Y."/>
            <person name="Fujimori Y."/>
            <person name="Komiyama M."/>
            <person name="Tashiro H."/>
            <person name="Tanigami A."/>
            <person name="Fujiwara T."/>
            <person name="Ono T."/>
            <person name="Yamada K."/>
            <person name="Fujii Y."/>
            <person name="Ozaki K."/>
            <person name="Hirao M."/>
            <person name="Ohmori Y."/>
            <person name="Kawabata A."/>
            <person name="Hikiji T."/>
            <person name="Kobatake N."/>
            <person name="Inagaki H."/>
            <person name="Ikema Y."/>
            <person name="Okamoto S."/>
            <person name="Okitani R."/>
            <person name="Kawakami T."/>
            <person name="Noguchi S."/>
            <person name="Itoh T."/>
            <person name="Shigeta K."/>
            <person name="Senba T."/>
            <person name="Matsumura K."/>
            <person name="Nakajima Y."/>
            <person name="Mizuno T."/>
            <person name="Morinaga M."/>
            <person name="Sasaki M."/>
            <person name="Togashi T."/>
            <person name="Oyama M."/>
            <person name="Hata H."/>
            <person name="Watanabe M."/>
            <person name="Komatsu T."/>
            <person name="Mizushima-Sugano J."/>
            <person name="Satoh T."/>
            <person name="Shirai Y."/>
            <person name="Takahashi Y."/>
            <person name="Nakagawa K."/>
            <person name="Okumura K."/>
            <person name="Nagase T."/>
            <person name="Nomura N."/>
            <person name="Kikuchi H."/>
            <person name="Masuho Y."/>
            <person name="Yamashita R."/>
            <person name="Nakai K."/>
            <person name="Yada T."/>
            <person name="Nakamura Y."/>
            <person name="Ohara O."/>
            <person name="Isogai T."/>
            <person name="Sugano S."/>
        </authorList>
    </citation>
    <scope>NUCLEOTIDE SEQUENCE [LARGE SCALE MRNA]</scope>
    <source>
        <tissue>Testis</tissue>
    </source>
</reference>
<reference key="2">
    <citation type="journal article" date="2006" name="Nature">
        <title>DNA sequence of human chromosome 17 and analysis of rearrangement in the human lineage.</title>
        <authorList>
            <person name="Zody M.C."/>
            <person name="Garber M."/>
            <person name="Adams D.J."/>
            <person name="Sharpe T."/>
            <person name="Harrow J."/>
            <person name="Lupski J.R."/>
            <person name="Nicholson C."/>
            <person name="Searle S.M."/>
            <person name="Wilming L."/>
            <person name="Young S.K."/>
            <person name="Abouelleil A."/>
            <person name="Allen N.R."/>
            <person name="Bi W."/>
            <person name="Bloom T."/>
            <person name="Borowsky M.L."/>
            <person name="Bugalter B.E."/>
            <person name="Butler J."/>
            <person name="Chang J.L."/>
            <person name="Chen C.-K."/>
            <person name="Cook A."/>
            <person name="Corum B."/>
            <person name="Cuomo C.A."/>
            <person name="de Jong P.J."/>
            <person name="DeCaprio D."/>
            <person name="Dewar K."/>
            <person name="FitzGerald M."/>
            <person name="Gilbert J."/>
            <person name="Gibson R."/>
            <person name="Gnerre S."/>
            <person name="Goldstein S."/>
            <person name="Grafham D.V."/>
            <person name="Grocock R."/>
            <person name="Hafez N."/>
            <person name="Hagopian D.S."/>
            <person name="Hart E."/>
            <person name="Norman C.H."/>
            <person name="Humphray S."/>
            <person name="Jaffe D.B."/>
            <person name="Jones M."/>
            <person name="Kamal M."/>
            <person name="Khodiyar V.K."/>
            <person name="LaButti K."/>
            <person name="Laird G."/>
            <person name="Lehoczky J."/>
            <person name="Liu X."/>
            <person name="Lokyitsang T."/>
            <person name="Loveland J."/>
            <person name="Lui A."/>
            <person name="Macdonald P."/>
            <person name="Major J.E."/>
            <person name="Matthews L."/>
            <person name="Mauceli E."/>
            <person name="McCarroll S.A."/>
            <person name="Mihalev A.H."/>
            <person name="Mudge J."/>
            <person name="Nguyen C."/>
            <person name="Nicol R."/>
            <person name="O'Leary S.B."/>
            <person name="Osoegawa K."/>
            <person name="Schwartz D.C."/>
            <person name="Shaw-Smith C."/>
            <person name="Stankiewicz P."/>
            <person name="Steward C."/>
            <person name="Swarbreck D."/>
            <person name="Venkataraman V."/>
            <person name="Whittaker C.A."/>
            <person name="Yang X."/>
            <person name="Zimmer A.R."/>
            <person name="Bradley A."/>
            <person name="Hubbard T."/>
            <person name="Birren B.W."/>
            <person name="Rogers J."/>
            <person name="Lander E.S."/>
            <person name="Nusbaum C."/>
        </authorList>
    </citation>
    <scope>NUCLEOTIDE SEQUENCE [LARGE SCALE GENOMIC DNA]</scope>
</reference>
<reference key="3">
    <citation type="journal article" date="2010" name="Science">
        <title>Diversity of human copy number variation and multicopy genes.</title>
        <authorList>
            <person name="Sudmant P.H."/>
            <person name="Kitzman J.O."/>
            <person name="Antonacci F."/>
            <person name="Alkan C."/>
            <person name="Malig M."/>
            <person name="Tsalenko A."/>
            <person name="Sampas N."/>
            <person name="Bruhn L."/>
            <person name="Shendure J."/>
            <person name="Eichler E.E."/>
        </authorList>
    </citation>
    <scope>MISCELLANEOUS</scope>
    <scope>COPY NUMBER VARIATION</scope>
</reference>
<accession>A6NDS4</accession>
<accession>A8K892</accession>
<sequence>MDVVEVAGSWWAQEREDIIMKYEKGHRAGLPEDKGPKPFRSYNNNVDHLGIVHETELPPLTAREAKQIRREISRKSKWVDMLGDWEKYKSSRKLIDRAYKGMPMNIRGPMWSVLLNIEEMKLKNPGRYQIMKEKGKRSSEHIQRIDRDISGTLRKHMFFRDRYGTKQRELLHILLAYEEYNPEVGYCRDLSHIAALFLLYLPEEDAFWALVQLLASERHSLQGFHSPNGGTVQGLQDQQEHVVATSQSKTMGHQDKKDLCGQCSPLGCLIRILIDGISLGLTLRLWDVYLVEGEQALMPITRIAFKVQQKRLTKTSRCGPWARFCNRFVDTWARDEDTVLKHLRASMKKLTRKQGDLPPPAKPEQGSSASRPVPASRGRKTLCKGDRQAPPGPPARFPRPIWSASPPRAPRSSTPCPGGAVREDTYPVGTQGVPSPALAQGGPQGSWRFLQWNSMPRLPTDLDVEGPWFRHYDFRQSCWVRAISQEDQLAPCWQAEHPAERVRSAFAAPSTDSDQGTPFRARDEQQCAPTSGPCLCGLHLESSQFPPGF</sequence>
<evidence type="ECO:0000250" key="1"/>
<evidence type="ECO:0000255" key="2">
    <source>
        <dbReference type="PROSITE-ProRule" id="PRU00163"/>
    </source>
</evidence>
<evidence type="ECO:0000256" key="3">
    <source>
        <dbReference type="SAM" id="MobiDB-lite"/>
    </source>
</evidence>
<evidence type="ECO:0000305" key="4"/>
<protein>
    <recommendedName>
        <fullName>TBC1 domain family member 3B</fullName>
    </recommendedName>
</protein>
<feature type="chain" id="PRO_0000300264" description="TBC1 domain family member 3B">
    <location>
        <begin position="1"/>
        <end position="549"/>
    </location>
</feature>
<feature type="domain" description="Rab-GAP TBC" evidence="2">
    <location>
        <begin position="101"/>
        <end position="293"/>
    </location>
</feature>
<feature type="region of interest" description="Disordered" evidence="3">
    <location>
        <begin position="350"/>
        <end position="426"/>
    </location>
</feature>
<feature type="compositionally biased region" description="Low complexity" evidence="3">
    <location>
        <begin position="398"/>
        <end position="417"/>
    </location>
</feature>
<feature type="lipid moiety-binding region" description="S-palmitoyl cysteine" evidence="1">
    <location>
        <position position="318"/>
    </location>
</feature>
<feature type="lipid moiety-binding region" description="S-palmitoyl cysteine" evidence="1">
    <location>
        <position position="325"/>
    </location>
</feature>
<feature type="sequence conflict" description="In Ref. 1; BAF84946." evidence="4" ref="1">
    <original>L</original>
    <variation>F</variation>
    <location>
        <position position="201"/>
    </location>
</feature>
<feature type="sequence conflict" description="In Ref. 1; BAF84946." evidence="4" ref="1">
    <original>R</original>
    <variation>G</variation>
    <location>
        <position position="379"/>
    </location>
</feature>
<feature type="sequence conflict" description="In Ref. 1; BAF84946." evidence="4" ref="1">
    <original>C</original>
    <variation>Y</variation>
    <location>
        <position position="527"/>
    </location>
</feature>